<name>RL30_SHIB3</name>
<feature type="chain" id="PRO_1000144720" description="Large ribosomal subunit protein uL30">
    <location>
        <begin position="1"/>
        <end position="59"/>
    </location>
</feature>
<evidence type="ECO:0000255" key="1">
    <source>
        <dbReference type="HAMAP-Rule" id="MF_01371"/>
    </source>
</evidence>
<evidence type="ECO:0000305" key="2"/>
<protein>
    <recommendedName>
        <fullName evidence="1">Large ribosomal subunit protein uL30</fullName>
    </recommendedName>
    <alternativeName>
        <fullName evidence="2">50S ribosomal protein L30</fullName>
    </alternativeName>
</protein>
<keyword id="KW-1185">Reference proteome</keyword>
<keyword id="KW-0687">Ribonucleoprotein</keyword>
<keyword id="KW-0689">Ribosomal protein</keyword>
<proteinExistence type="inferred from homology"/>
<accession>B2U2S0</accession>
<organism>
    <name type="scientific">Shigella boydii serotype 18 (strain CDC 3083-94 / BS512)</name>
    <dbReference type="NCBI Taxonomy" id="344609"/>
    <lineage>
        <taxon>Bacteria</taxon>
        <taxon>Pseudomonadati</taxon>
        <taxon>Pseudomonadota</taxon>
        <taxon>Gammaproteobacteria</taxon>
        <taxon>Enterobacterales</taxon>
        <taxon>Enterobacteriaceae</taxon>
        <taxon>Shigella</taxon>
    </lineage>
</organism>
<reference key="1">
    <citation type="submission" date="2008-05" db="EMBL/GenBank/DDBJ databases">
        <title>Complete sequence of Shigella boydii serotype 18 strain BS512.</title>
        <authorList>
            <person name="Rasko D.A."/>
            <person name="Rosovitz M."/>
            <person name="Maurelli A.T."/>
            <person name="Myers G."/>
            <person name="Seshadri R."/>
            <person name="Cer R."/>
            <person name="Jiang L."/>
            <person name="Ravel J."/>
            <person name="Sebastian Y."/>
        </authorList>
    </citation>
    <scope>NUCLEOTIDE SEQUENCE [LARGE SCALE GENOMIC DNA]</scope>
    <source>
        <strain>CDC 3083-94 / BS512</strain>
    </source>
</reference>
<gene>
    <name evidence="1" type="primary">rpmD</name>
    <name type="ordered locus">SbBS512_E3687</name>
</gene>
<dbReference type="EMBL" id="CP001063">
    <property type="protein sequence ID" value="ACD08781.1"/>
    <property type="molecule type" value="Genomic_DNA"/>
</dbReference>
<dbReference type="RefSeq" id="WP_001140433.1">
    <property type="nucleotide sequence ID" value="NC_010658.1"/>
</dbReference>
<dbReference type="SMR" id="B2U2S0"/>
<dbReference type="STRING" id="344609.SbBS512_E3687"/>
<dbReference type="GeneID" id="93778685"/>
<dbReference type="KEGG" id="sbc:SbBS512_E3687"/>
<dbReference type="HOGENOM" id="CLU_131047_1_4_6"/>
<dbReference type="Proteomes" id="UP000001030">
    <property type="component" value="Chromosome"/>
</dbReference>
<dbReference type="GO" id="GO:0022625">
    <property type="term" value="C:cytosolic large ribosomal subunit"/>
    <property type="evidence" value="ECO:0007669"/>
    <property type="project" value="TreeGrafter"/>
</dbReference>
<dbReference type="GO" id="GO:0003735">
    <property type="term" value="F:structural constituent of ribosome"/>
    <property type="evidence" value="ECO:0007669"/>
    <property type="project" value="InterPro"/>
</dbReference>
<dbReference type="GO" id="GO:0006412">
    <property type="term" value="P:translation"/>
    <property type="evidence" value="ECO:0007669"/>
    <property type="project" value="UniProtKB-UniRule"/>
</dbReference>
<dbReference type="CDD" id="cd01658">
    <property type="entry name" value="Ribosomal_L30"/>
    <property type="match status" value="1"/>
</dbReference>
<dbReference type="FunFam" id="3.30.1390.20:FF:000001">
    <property type="entry name" value="50S ribosomal protein L30"/>
    <property type="match status" value="1"/>
</dbReference>
<dbReference type="Gene3D" id="3.30.1390.20">
    <property type="entry name" value="Ribosomal protein L30, ferredoxin-like fold domain"/>
    <property type="match status" value="1"/>
</dbReference>
<dbReference type="HAMAP" id="MF_01371_B">
    <property type="entry name" value="Ribosomal_uL30_B"/>
    <property type="match status" value="1"/>
</dbReference>
<dbReference type="InterPro" id="IPR036919">
    <property type="entry name" value="Ribo_uL30_ferredoxin-like_sf"/>
</dbReference>
<dbReference type="InterPro" id="IPR005996">
    <property type="entry name" value="Ribosomal_uL30_bac-type"/>
</dbReference>
<dbReference type="InterPro" id="IPR018038">
    <property type="entry name" value="Ribosomal_uL30_CS"/>
</dbReference>
<dbReference type="InterPro" id="IPR016082">
    <property type="entry name" value="Ribosomal_uL30_ferredoxin-like"/>
</dbReference>
<dbReference type="NCBIfam" id="TIGR01308">
    <property type="entry name" value="rpmD_bact"/>
    <property type="match status" value="1"/>
</dbReference>
<dbReference type="PANTHER" id="PTHR15892:SF2">
    <property type="entry name" value="LARGE RIBOSOMAL SUBUNIT PROTEIN UL30M"/>
    <property type="match status" value="1"/>
</dbReference>
<dbReference type="PANTHER" id="PTHR15892">
    <property type="entry name" value="MITOCHONDRIAL RIBOSOMAL PROTEIN L30"/>
    <property type="match status" value="1"/>
</dbReference>
<dbReference type="Pfam" id="PF00327">
    <property type="entry name" value="Ribosomal_L30"/>
    <property type="match status" value="1"/>
</dbReference>
<dbReference type="PIRSF" id="PIRSF002211">
    <property type="entry name" value="Ribosomal_L30_bac-type"/>
    <property type="match status" value="1"/>
</dbReference>
<dbReference type="SUPFAM" id="SSF55129">
    <property type="entry name" value="Ribosomal protein L30p/L7e"/>
    <property type="match status" value="1"/>
</dbReference>
<dbReference type="PROSITE" id="PS00634">
    <property type="entry name" value="RIBOSOMAL_L30"/>
    <property type="match status" value="1"/>
</dbReference>
<sequence>MAKTIKITQTRSAIGRLPKHKATLLGLGLRRIGHTVEREDTPAIRGMINAVSFMVKVEE</sequence>
<comment type="subunit">
    <text evidence="1">Part of the 50S ribosomal subunit.</text>
</comment>
<comment type="similarity">
    <text evidence="1">Belongs to the universal ribosomal protein uL30 family.</text>
</comment>